<proteinExistence type="inferred from homology"/>
<evidence type="ECO:0000255" key="1">
    <source>
        <dbReference type="HAMAP-Rule" id="MF_00652"/>
    </source>
</evidence>
<dbReference type="EMBL" id="CP000503">
    <property type="protein sequence ID" value="ABM25927.1"/>
    <property type="molecule type" value="Genomic_DNA"/>
</dbReference>
<dbReference type="SMR" id="A1RMN2"/>
<dbReference type="KEGG" id="shw:Sputw3181_3112"/>
<dbReference type="HOGENOM" id="CLU_061989_0_0_6"/>
<dbReference type="Proteomes" id="UP000002597">
    <property type="component" value="Chromosome"/>
</dbReference>
<dbReference type="GO" id="GO:0005829">
    <property type="term" value="C:cytosol"/>
    <property type="evidence" value="ECO:0007669"/>
    <property type="project" value="TreeGrafter"/>
</dbReference>
<dbReference type="GO" id="GO:0033194">
    <property type="term" value="P:response to hydroperoxide"/>
    <property type="evidence" value="ECO:0007669"/>
    <property type="project" value="TreeGrafter"/>
</dbReference>
<dbReference type="HAMAP" id="MF_00652">
    <property type="entry name" value="UPF0246"/>
    <property type="match status" value="1"/>
</dbReference>
<dbReference type="InterPro" id="IPR005583">
    <property type="entry name" value="YaaA"/>
</dbReference>
<dbReference type="NCBIfam" id="NF002541">
    <property type="entry name" value="PRK02101.1-1"/>
    <property type="match status" value="1"/>
</dbReference>
<dbReference type="NCBIfam" id="NF002542">
    <property type="entry name" value="PRK02101.1-3"/>
    <property type="match status" value="1"/>
</dbReference>
<dbReference type="PANTHER" id="PTHR30283:SF4">
    <property type="entry name" value="PEROXIDE STRESS RESISTANCE PROTEIN YAAA"/>
    <property type="match status" value="1"/>
</dbReference>
<dbReference type="PANTHER" id="PTHR30283">
    <property type="entry name" value="PEROXIDE STRESS RESPONSE PROTEIN YAAA"/>
    <property type="match status" value="1"/>
</dbReference>
<dbReference type="Pfam" id="PF03883">
    <property type="entry name" value="H2O2_YaaD"/>
    <property type="match status" value="1"/>
</dbReference>
<gene>
    <name type="ordered locus">Sputw3181_3112</name>
</gene>
<feature type="chain" id="PRO_1000061638" description="UPF0246 protein Sputw3181_3112">
    <location>
        <begin position="1"/>
        <end position="257"/>
    </location>
</feature>
<comment type="similarity">
    <text evidence="1">Belongs to the UPF0246 family.</text>
</comment>
<organism>
    <name type="scientific">Shewanella sp. (strain W3-18-1)</name>
    <dbReference type="NCBI Taxonomy" id="351745"/>
    <lineage>
        <taxon>Bacteria</taxon>
        <taxon>Pseudomonadati</taxon>
        <taxon>Pseudomonadota</taxon>
        <taxon>Gammaproteobacteria</taxon>
        <taxon>Alteromonadales</taxon>
        <taxon>Shewanellaceae</taxon>
        <taxon>Shewanella</taxon>
    </lineage>
</organism>
<protein>
    <recommendedName>
        <fullName evidence="1">UPF0246 protein Sputw3181_3112</fullName>
    </recommendedName>
</protein>
<sequence>MLILVSPAKTLDFEQPPLTQVYSQPDFLYHSQELIQVCRQLAPSDIATLMKVSDKIAGLNAARFEGWQPQFTLENAKQAIFAFRGDVYTGFDADTLSSQELERAQSQLRILSGLYGLLRPLDLILPYRLEMGTALNNARGKNLYDFWGDILTLAVNKTLTEQGDRIVVNLASNEYFKAIKVRQLDGQLITPVFKDYKNGQYKVISFFAKRARGMMARYIIKQQINSIDELIKFDAAGYYYSEEHSTQSEPTFLREAQ</sequence>
<reference key="1">
    <citation type="submission" date="2006-12" db="EMBL/GenBank/DDBJ databases">
        <title>Complete sequence of Shewanella sp. W3-18-1.</title>
        <authorList>
            <consortium name="US DOE Joint Genome Institute"/>
            <person name="Copeland A."/>
            <person name="Lucas S."/>
            <person name="Lapidus A."/>
            <person name="Barry K."/>
            <person name="Detter J.C."/>
            <person name="Glavina del Rio T."/>
            <person name="Hammon N."/>
            <person name="Israni S."/>
            <person name="Dalin E."/>
            <person name="Tice H."/>
            <person name="Pitluck S."/>
            <person name="Chain P."/>
            <person name="Malfatti S."/>
            <person name="Shin M."/>
            <person name="Vergez L."/>
            <person name="Schmutz J."/>
            <person name="Larimer F."/>
            <person name="Land M."/>
            <person name="Hauser L."/>
            <person name="Kyrpides N."/>
            <person name="Lykidis A."/>
            <person name="Tiedje J."/>
            <person name="Richardson P."/>
        </authorList>
    </citation>
    <scope>NUCLEOTIDE SEQUENCE [LARGE SCALE GENOMIC DNA]</scope>
    <source>
        <strain>W3-18-1</strain>
    </source>
</reference>
<name>Y3112_SHESW</name>
<accession>A1RMN2</accession>